<accession>Q54LN2</accession>
<proteinExistence type="inferred from homology"/>
<dbReference type="EMBL" id="AAFI02000088">
    <property type="protein sequence ID" value="EAL64174.1"/>
    <property type="molecule type" value="Genomic_DNA"/>
</dbReference>
<dbReference type="RefSeq" id="XP_637675.1">
    <property type="nucleotide sequence ID" value="XM_632583.1"/>
</dbReference>
<dbReference type="SMR" id="Q54LN2"/>
<dbReference type="GlyGen" id="Q54LN2">
    <property type="glycosylation" value="1 site"/>
</dbReference>
<dbReference type="PaxDb" id="44689-DDB0234205"/>
<dbReference type="EnsemblProtists" id="EAL64174">
    <property type="protein sequence ID" value="EAL64174"/>
    <property type="gene ID" value="DDB_G0286545"/>
</dbReference>
<dbReference type="GeneID" id="8625668"/>
<dbReference type="KEGG" id="ddi:DDB_G0286545"/>
<dbReference type="dictyBase" id="DDB_G0286545">
    <property type="gene designation" value="vps13D"/>
</dbReference>
<dbReference type="VEuPathDB" id="AmoebaDB:DDB_G0286545"/>
<dbReference type="eggNOG" id="KOG1796">
    <property type="taxonomic scope" value="Eukaryota"/>
</dbReference>
<dbReference type="eggNOG" id="KOG1809">
    <property type="taxonomic scope" value="Eukaryota"/>
</dbReference>
<dbReference type="HOGENOM" id="CLU_223579_0_0_1"/>
<dbReference type="InParanoid" id="Q54LN2"/>
<dbReference type="OMA" id="LQRTKMV"/>
<dbReference type="PRO" id="PR:Q54LN2"/>
<dbReference type="Proteomes" id="UP000002195">
    <property type="component" value="Chromosome 4"/>
</dbReference>
<dbReference type="GO" id="GO:0016020">
    <property type="term" value="C:membrane"/>
    <property type="evidence" value="ECO:0007669"/>
    <property type="project" value="UniProtKB-SubCell"/>
</dbReference>
<dbReference type="GO" id="GO:0045053">
    <property type="term" value="P:protein retention in Golgi apparatus"/>
    <property type="evidence" value="ECO:0000318"/>
    <property type="project" value="GO_Central"/>
</dbReference>
<dbReference type="GO" id="GO:0006623">
    <property type="term" value="P:protein targeting to vacuole"/>
    <property type="evidence" value="ECO:0000318"/>
    <property type="project" value="GO_Central"/>
</dbReference>
<dbReference type="InterPro" id="IPR026847">
    <property type="entry name" value="VPS13"/>
</dbReference>
<dbReference type="InterPro" id="IPR056748">
    <property type="entry name" value="VPS13-like_C"/>
</dbReference>
<dbReference type="InterPro" id="IPR056747">
    <property type="entry name" value="VPS13-like_M"/>
</dbReference>
<dbReference type="InterPro" id="IPR026854">
    <property type="entry name" value="VPS13_N"/>
</dbReference>
<dbReference type="PANTHER" id="PTHR16166:SF138">
    <property type="entry name" value="INTERMEMBRANE LIPID TRANSFER PROTEIN VPS13D"/>
    <property type="match status" value="1"/>
</dbReference>
<dbReference type="PANTHER" id="PTHR16166">
    <property type="entry name" value="VACUOLAR PROTEIN SORTING-ASSOCIATED PROTEIN VPS13"/>
    <property type="match status" value="1"/>
</dbReference>
<dbReference type="Pfam" id="PF25037">
    <property type="entry name" value="VPS13_C"/>
    <property type="match status" value="1"/>
</dbReference>
<dbReference type="Pfam" id="PF25033">
    <property type="entry name" value="VPS13_M"/>
    <property type="match status" value="1"/>
</dbReference>
<dbReference type="Pfam" id="PF12624">
    <property type="entry name" value="VPS13_N"/>
    <property type="match status" value="1"/>
</dbReference>
<gene>
    <name type="primary">vps13D</name>
    <name type="ORF">DDB_G0286545</name>
</gene>
<evidence type="ECO:0000250" key="1">
    <source>
        <dbReference type="UniProtKB" id="Q07878"/>
    </source>
</evidence>
<evidence type="ECO:0000250" key="2">
    <source>
        <dbReference type="UniProtKB" id="Q96RL7"/>
    </source>
</evidence>
<evidence type="ECO:0000255" key="3"/>
<evidence type="ECO:0000256" key="4">
    <source>
        <dbReference type="SAM" id="MobiDB-lite"/>
    </source>
</evidence>
<evidence type="ECO:0000305" key="5"/>
<reference key="1">
    <citation type="journal article" date="2005" name="Nature">
        <title>The genome of the social amoeba Dictyostelium discoideum.</title>
        <authorList>
            <person name="Eichinger L."/>
            <person name="Pachebat J.A."/>
            <person name="Gloeckner G."/>
            <person name="Rajandream M.A."/>
            <person name="Sucgang R."/>
            <person name="Berriman M."/>
            <person name="Song J."/>
            <person name="Olsen R."/>
            <person name="Szafranski K."/>
            <person name="Xu Q."/>
            <person name="Tunggal B."/>
            <person name="Kummerfeld S."/>
            <person name="Madera M."/>
            <person name="Konfortov B.A."/>
            <person name="Rivero F."/>
            <person name="Bankier A.T."/>
            <person name="Lehmann R."/>
            <person name="Hamlin N."/>
            <person name="Davies R."/>
            <person name="Gaudet P."/>
            <person name="Fey P."/>
            <person name="Pilcher K."/>
            <person name="Chen G."/>
            <person name="Saunders D."/>
            <person name="Sodergren E.J."/>
            <person name="Davis P."/>
            <person name="Kerhornou A."/>
            <person name="Nie X."/>
            <person name="Hall N."/>
            <person name="Anjard C."/>
            <person name="Hemphill L."/>
            <person name="Bason N."/>
            <person name="Farbrother P."/>
            <person name="Desany B."/>
            <person name="Just E."/>
            <person name="Morio T."/>
            <person name="Rost R."/>
            <person name="Churcher C.M."/>
            <person name="Cooper J."/>
            <person name="Haydock S."/>
            <person name="van Driessche N."/>
            <person name="Cronin A."/>
            <person name="Goodhead I."/>
            <person name="Muzny D.M."/>
            <person name="Mourier T."/>
            <person name="Pain A."/>
            <person name="Lu M."/>
            <person name="Harper D."/>
            <person name="Lindsay R."/>
            <person name="Hauser H."/>
            <person name="James K.D."/>
            <person name="Quiles M."/>
            <person name="Madan Babu M."/>
            <person name="Saito T."/>
            <person name="Buchrieser C."/>
            <person name="Wardroper A."/>
            <person name="Felder M."/>
            <person name="Thangavelu M."/>
            <person name="Johnson D."/>
            <person name="Knights A."/>
            <person name="Loulseged H."/>
            <person name="Mungall K.L."/>
            <person name="Oliver K."/>
            <person name="Price C."/>
            <person name="Quail M.A."/>
            <person name="Urushihara H."/>
            <person name="Hernandez J."/>
            <person name="Rabbinowitsch E."/>
            <person name="Steffen D."/>
            <person name="Sanders M."/>
            <person name="Ma J."/>
            <person name="Kohara Y."/>
            <person name="Sharp S."/>
            <person name="Simmonds M.N."/>
            <person name="Spiegler S."/>
            <person name="Tivey A."/>
            <person name="Sugano S."/>
            <person name="White B."/>
            <person name="Walker D."/>
            <person name="Woodward J.R."/>
            <person name="Winckler T."/>
            <person name="Tanaka Y."/>
            <person name="Shaulsky G."/>
            <person name="Schleicher M."/>
            <person name="Weinstock G.M."/>
            <person name="Rosenthal A."/>
            <person name="Cox E.C."/>
            <person name="Chisholm R.L."/>
            <person name="Gibbs R.A."/>
            <person name="Loomis W.F."/>
            <person name="Platzer M."/>
            <person name="Kay R.R."/>
            <person name="Williams J.G."/>
            <person name="Dear P.H."/>
            <person name="Noegel A.A."/>
            <person name="Barrell B.G."/>
            <person name="Kuspa A."/>
        </authorList>
    </citation>
    <scope>NUCLEOTIDE SEQUENCE [LARGE SCALE GENOMIC DNA]</scope>
    <source>
        <strain>AX4</strain>
    </source>
</reference>
<organism>
    <name type="scientific">Dictyostelium discoideum</name>
    <name type="common">Social amoeba</name>
    <dbReference type="NCBI Taxonomy" id="44689"/>
    <lineage>
        <taxon>Eukaryota</taxon>
        <taxon>Amoebozoa</taxon>
        <taxon>Evosea</taxon>
        <taxon>Eumycetozoa</taxon>
        <taxon>Dictyostelia</taxon>
        <taxon>Dictyosteliales</taxon>
        <taxon>Dictyosteliaceae</taxon>
        <taxon>Dictyostelium</taxon>
    </lineage>
</organism>
<feature type="chain" id="PRO_0000365953" description="Intermembrane lipid transfer protein vps13D">
    <location>
        <begin position="1"/>
        <end position="4592"/>
    </location>
</feature>
<feature type="domain" description="Chorein N-terminal" evidence="3">
    <location>
        <begin position="3"/>
        <end position="102"/>
    </location>
</feature>
<feature type="repeat" description="TPR 1">
    <location>
        <begin position="2321"/>
        <end position="2354"/>
    </location>
</feature>
<feature type="repeat" description="TPR 2">
    <location>
        <begin position="3789"/>
        <end position="3822"/>
    </location>
</feature>
<feature type="region of interest" description="Disordered" evidence="4">
    <location>
        <begin position="95"/>
        <end position="142"/>
    </location>
</feature>
<feature type="region of interest" description="Disordered" evidence="4">
    <location>
        <begin position="157"/>
        <end position="199"/>
    </location>
</feature>
<feature type="region of interest" description="Disordered" evidence="4">
    <location>
        <begin position="286"/>
        <end position="307"/>
    </location>
</feature>
<feature type="region of interest" description="Disordered" evidence="4">
    <location>
        <begin position="445"/>
        <end position="529"/>
    </location>
</feature>
<feature type="region of interest" description="Disordered" evidence="4">
    <location>
        <begin position="574"/>
        <end position="605"/>
    </location>
</feature>
<feature type="region of interest" description="Disordered" evidence="4">
    <location>
        <begin position="826"/>
        <end position="861"/>
    </location>
</feature>
<feature type="region of interest" description="Disordered" evidence="4">
    <location>
        <begin position="1040"/>
        <end position="1083"/>
    </location>
</feature>
<feature type="region of interest" description="Disordered" evidence="4">
    <location>
        <begin position="1219"/>
        <end position="1249"/>
    </location>
</feature>
<feature type="region of interest" description="Disordered" evidence="4">
    <location>
        <begin position="1655"/>
        <end position="1717"/>
    </location>
</feature>
<feature type="region of interest" description="Disordered" evidence="4">
    <location>
        <begin position="1855"/>
        <end position="1886"/>
    </location>
</feature>
<feature type="region of interest" description="Disordered" evidence="4">
    <location>
        <begin position="1971"/>
        <end position="2001"/>
    </location>
</feature>
<feature type="region of interest" description="Disordered" evidence="4">
    <location>
        <begin position="2025"/>
        <end position="2056"/>
    </location>
</feature>
<feature type="region of interest" description="Disordered" evidence="4">
    <location>
        <begin position="2245"/>
        <end position="2270"/>
    </location>
</feature>
<feature type="region of interest" description="Disordered" evidence="4">
    <location>
        <begin position="2456"/>
        <end position="2489"/>
    </location>
</feature>
<feature type="region of interest" description="Disordered" evidence="4">
    <location>
        <begin position="2862"/>
        <end position="2882"/>
    </location>
</feature>
<feature type="region of interest" description="Disordered" evidence="4">
    <location>
        <begin position="3006"/>
        <end position="3035"/>
    </location>
</feature>
<feature type="region of interest" description="Disordered" evidence="4">
    <location>
        <begin position="3106"/>
        <end position="3129"/>
    </location>
</feature>
<feature type="region of interest" description="Disordered" evidence="4">
    <location>
        <begin position="3356"/>
        <end position="3384"/>
    </location>
</feature>
<feature type="region of interest" description="Disordered" evidence="4">
    <location>
        <begin position="3560"/>
        <end position="3580"/>
    </location>
</feature>
<feature type="region of interest" description="Disordered" evidence="4">
    <location>
        <begin position="3630"/>
        <end position="3679"/>
    </location>
</feature>
<feature type="region of interest" description="Disordered" evidence="4">
    <location>
        <begin position="3872"/>
        <end position="3897"/>
    </location>
</feature>
<feature type="region of interest" description="Disordered" evidence="4">
    <location>
        <begin position="4105"/>
        <end position="4135"/>
    </location>
</feature>
<feature type="coiled-coil region" evidence="3">
    <location>
        <begin position="437"/>
        <end position="517"/>
    </location>
</feature>
<feature type="compositionally biased region" description="Low complexity" evidence="4">
    <location>
        <begin position="117"/>
        <end position="139"/>
    </location>
</feature>
<feature type="compositionally biased region" description="Low complexity" evidence="4">
    <location>
        <begin position="172"/>
        <end position="199"/>
    </location>
</feature>
<feature type="compositionally biased region" description="Basic and acidic residues" evidence="4">
    <location>
        <begin position="445"/>
        <end position="457"/>
    </location>
</feature>
<feature type="compositionally biased region" description="Low complexity" evidence="4">
    <location>
        <begin position="458"/>
        <end position="474"/>
    </location>
</feature>
<feature type="compositionally biased region" description="Basic and acidic residues" evidence="4">
    <location>
        <begin position="475"/>
        <end position="529"/>
    </location>
</feature>
<feature type="compositionally biased region" description="Low complexity" evidence="4">
    <location>
        <begin position="574"/>
        <end position="591"/>
    </location>
</feature>
<feature type="compositionally biased region" description="Polar residues" evidence="4">
    <location>
        <begin position="592"/>
        <end position="603"/>
    </location>
</feature>
<feature type="compositionally biased region" description="Low complexity" evidence="4">
    <location>
        <begin position="829"/>
        <end position="838"/>
    </location>
</feature>
<feature type="compositionally biased region" description="Polar residues" evidence="4">
    <location>
        <begin position="1040"/>
        <end position="1059"/>
    </location>
</feature>
<feature type="compositionally biased region" description="Low complexity" evidence="4">
    <location>
        <begin position="1064"/>
        <end position="1076"/>
    </location>
</feature>
<feature type="compositionally biased region" description="Acidic residues" evidence="4">
    <location>
        <begin position="1234"/>
        <end position="1244"/>
    </location>
</feature>
<feature type="compositionally biased region" description="Low complexity" evidence="4">
    <location>
        <begin position="1669"/>
        <end position="1689"/>
    </location>
</feature>
<feature type="compositionally biased region" description="Low complexity" evidence="4">
    <location>
        <begin position="1702"/>
        <end position="1715"/>
    </location>
</feature>
<feature type="compositionally biased region" description="Low complexity" evidence="4">
    <location>
        <begin position="2037"/>
        <end position="2048"/>
    </location>
</feature>
<feature type="compositionally biased region" description="Low complexity" evidence="4">
    <location>
        <begin position="2458"/>
        <end position="2478"/>
    </location>
</feature>
<feature type="compositionally biased region" description="Low complexity" evidence="4">
    <location>
        <begin position="2864"/>
        <end position="2880"/>
    </location>
</feature>
<feature type="compositionally biased region" description="Low complexity" evidence="4">
    <location>
        <begin position="3015"/>
        <end position="3035"/>
    </location>
</feature>
<feature type="compositionally biased region" description="Low complexity" evidence="4">
    <location>
        <begin position="3358"/>
        <end position="3384"/>
    </location>
</feature>
<feature type="compositionally biased region" description="Basic residues" evidence="4">
    <location>
        <begin position="3569"/>
        <end position="3580"/>
    </location>
</feature>
<feature type="compositionally biased region" description="Low complexity" evidence="4">
    <location>
        <begin position="3640"/>
        <end position="3679"/>
    </location>
</feature>
<feature type="compositionally biased region" description="Low complexity" evidence="4">
    <location>
        <begin position="3872"/>
        <end position="3894"/>
    </location>
</feature>
<feature type="compositionally biased region" description="Low complexity" evidence="4">
    <location>
        <begin position="4111"/>
        <end position="4135"/>
    </location>
</feature>
<keyword id="KW-0175">Coiled coil</keyword>
<keyword id="KW-0472">Membrane</keyword>
<keyword id="KW-0653">Protein transport</keyword>
<keyword id="KW-1185">Reference proteome</keyword>
<keyword id="KW-0677">Repeat</keyword>
<keyword id="KW-0802">TPR repeat</keyword>
<keyword id="KW-0813">Transport</keyword>
<name>VP13D_DICDI</name>
<sequence>MVFESVVAEVIDRFLGSFLQEVGKKQLKIGVLNGNVVLKNIEVKPEAFKAFDLPLSIDRGIVGKLTIKVPWTSLKSESVVVHLQDIYILASSSSTNVSSNYSSSDDDSSYHSDDDNSSSNNNNNNNNDSSSSSSNTTSTASQLYDSSSEKFLKFLKLDKKKPKKENSNGDLKSTNTTTNNNGINNSNDKNKNNNNIDSQNDIEFDEESLNELNVEVNGKKKKDGFKEKLITKIINNLQVVIEKVHIRIEERKNNRNIAIGLCLDKLFVQSTDESWNPIFIDTMPTSTTSSNNNNNNNNNNTTSSSSSSSILNKLAKLSDLSIYINHDQEPMKNLPTKDLCQALRDSIPTSKNTLSHHMFLDPLSANLCLKLHQSAGSIQSINKIEIESIIEEIGLCLEPQQYSSLLSILENISEFVNDIKEEKTQNNKSAFESILKKNATIKLNKKDDKKDDKKDDINSSSSSIGSSNSSNNTPTKDKNKEKEKDKEKEKEKEKKKEKEKLKLEEKKKKKEEKGKSKSKDSKKNKIKGIEFEVEPQQLITKSDSSDSLQSLEKPSKELLKQQFYDTIGYVSPTSNSTTTNNSNNNSSSSPNILATSPSNNSLSPMLISKPIQPKRIEKELIMNFQIKTIHVKLLSDEPEKELNKQATLIYGDISNISFSLYKKADVMNLDSLIKSIKLSGLWVQNEQFPDMISSSTISENWLSFQMKMSPILDSSSGVGVGVGGGGSGTTSPLQTIITTNGNGSGSKKKPQSTPKNITILIDVKPMFFVLNSAAILRYLQLITPNHTIDLSGFSSGKKRPLSRNKVTLSIIAQSPTVIIPISSAENYNNQSSSSSSSSQPPPPKPTEETSTTNKPKKQQGISFSENTVAILDLGKISLEMLPSSPIGVNDGNFSPSLPIPSSSSNVEYQNFQISTMNIKSILTKPPTLTGSTTTLKFGKHHPSFKEDNKIETYCNQRTEMDKILFETSLIVHMKKRKSDQPDYENPKVIMNVNFPFVRFYFSPFSFYQIRLFVFQLMSEIQRVEEAFISSFQFKIRSNSTTSPTFNSLNNKPSTLQNNHIDIENGNSSNNNNTDSPSKSKRQWLSTSNSNLSTMVNNLTESTGIGIGKENEIIRKREIVFSSHVVFDDINIIVTNLFNLSTIDVEPILHIKSDQLVSNLKVEKSNQRDTTVIGDYAFNDCNIYKCTNENQRGGTNGHPSYTDDDIVISSNFNKFKSPKYFKNKRKEENEQNEGNTEDDEQEEEEQEKKPIIYGTIFHNKQLVPTYEKLSDIKINLSTSYCNLIPQITGNIIEIIQMIVVVNRKVTQSVQRQLEEQRMRRPPSRFTVNKVLIYISVKGIKSILMLPKLINTTTNTVATQQNNQQYKEEIISRFDMKEVDLEITKLPNRLILDFFVDGFELYDLVNDFNTNLYNKVLSNYDDSNLLLTFKYERISKIALPLVLLDADINRFQISLLPNFLNVLKDFILDLFQFIPGLIKQQKKTNKELTTTTTINDGSNMEKYKKKKGIKINARMEAPLLIIPENQLSRNQFIIDLGLLKINNEFISNQTLSLFHFNLSNVNLKTIQFNNNRFKENLVLNNLRLNVEMTSILVWKDNQNGIGVLPPPRLVLDVNLCDVVFKINQNDIMFLMDRVSNLMLIINSTKSEFLNLKIKQEQQQEQEQQQDEELQKSINSKPPSPKLSLMSPLRKSTTSPFKKFIPSSQQQQQQQQQQQQQQSNSNLNRLVNKLPNQQINQVEEILPIEEAPINKLNYGGSNGRMKLKLNLKIDSVRFYIEEIGSLFYIKDTKFKSDIGFDGYKQSIISIGKIYLFFNQLHQLSFTIPIDKIIQDPNQYEQILSLKDNSVINTLEVNFSTLSNNNNDNNNDNNNSNNSNNNNNTSNGSGNSLFKRMPIQSKENIHPFDSELNLTLRQFQITVSLNFISSILEFATPVIQKVLEFKKNKTATSTPNNNEINSLSNSSIISDMTPLSLSTSSLDNTSISTTTTTTTTTTTTTTTTTTTTSTAKIPTISIGSNRRLKKQNSIVMPLINDNSNKSPTSKSSSSKSSSSKSSKKEQQQEKKSIKVKLVINVESPQIVLMLNEDDAILIDLGKIHIENLFYFKTIKGIDLNYESMEIQLSNLFVEIFQSSSYVGSSFEEFNQNLPDGCGDDSYRNKCHLLEDVSLVVNIDIVDDFQSYSKICSTSNHYNNNNAPLPIQKVNIHCKSVSFNISHQGYQLLLNILINYMNCYKNSLEPILLLKKNFNNNNNNNNNNNNNNNNNNNNNNNNTNIINNSSKKKKKQILIDENGKEIDIKTEITVQLSELRFLMLLNHGMDKVRDQLATLQINDLGANIISIGNKSTSIKCFLRSIRLSDSRVDSGSKFIDLFCSKNITTFQGPLKDSLTNINISGSFNNSSNQEEPLITASIDIDKQLNKLTLDVKIEKPRLHISPTIVFMMVGFFLEPYSKVKLEIKQLFSKTNNNNNNNNNNYNNTNSNNNNNQEEEEKDSISTKKKKIISLKTNIKKLKILLVENPNSEVSNLVIVKMSIDASFDETMNGSSRIIGGSIKNFQMFSFRHSIANVSSSRAASLIDPVTFDFGCNLLLIKSTCPSIEKSNLLIDVNANIDQFNLFLSYHDILLIALIIGQLKKEFPKLSKSSKKSTTTTTTLTQKKLKNEKMINNVLTVKFNSPQFGLTLVNDYMDQNLPLIDLSFYRLDLLIQGTIGDEIKVTVDSKIVMDYFNINKMAFEPLIENWDIQLQMIKLNNQNSPNKPATSIQLSSNQFLNINASYGFAHSLLSTYHSIQYDLSTTLPIIMGLFKTKPEFSTFQLSSSPSLSSTQQPTRVFSPPTISTNLVGGGGSGGFKKSNSSSPLIRSSTIDSLNLAVSTSNNPNGSGYNNSNNNNGGGLSPDIILPISSTNRIRSGSLSQNPLGSVSTLVTSPNLTSNRLGFNTSPLLSQQQLKQQQQQQQLFNNSTLLRPIIQPLPATVRSSPLLQTISIRKLTSSFHPYWIINKTGVNLEYTVRVLSGEQKGKKKSTSTSTSPTLSSQPSSSSSSSSQYTHASFFLENEQKQPISIENSKSLLTAKKTRDFRGFKDESLDQGPHITIKLSNHNKNVKNFVNNSVVNSNSSGYNSSSPSPSSSSSPSSSSSNPIPIGRVGYRLIQVGGKKLIFEVGWNEDGSKVITVRSNVLLKNTTTMNLEVKLINNQINTSNGGSLSSNNNNTPKEIKKILFPNEELPVPLQYINSGKYLSILPIGDSGEEFKHSNPFNDLIALDDNDIHSLYKILTCPKIIPKSPQIHMKNNNNSNGNNNNITPPTYNNVKLILLNSNYEKCVINSTDNSSVNDEINTEQTLANLLPNEINLRNDKSKLLRSTISKLPTSPQTSSSSSPPPATTTTSTTTKRTTINSTMSSFNNIYSQNIIKILSPLVIENLLPCKIELTLYEGDIPLESSTLESCQSVPFYTQDPRSSLYVKISGIPGFVDQKHLIVDCDRNNGSNGNKPIIKSKIKLEDPNKILKPLNIMISNREDQVEGVRKLALYSVYWIINKTGLPMIFEKPNFIPMLFADKESKIPQMIAKSKNSLKIEQGRKSKKQQQQHRHNHCTIDTMILYSSDLLYIKVPNSDWSNVFSLETVGTDGIIHCFSNTNSNNSTNHHQDPFYSSTFNNSSNDNINNGNSNNNTSNSLSPPSSSSSINLSKLKSNSDNREYNFRASISMGKNKLQRTKMVTINFQYIFINKSSRRMLYRQIGQSYRIESIEPGESKPFHWPNRHGEKLIQIKFDDDYYDWSGSFTIDDLAELTVKQRSLNLMEVPKPYLGRVDIKDNDTHTSIHFYDQDTEYSPFRIENQIPRSIKFYQIGTSIIDILPPYQSIDYIWDELLGTKILRLEISSTTTTTTTTTTNSTNDINNDNNNNNNQYIENHSTFESSYSSSSVILDCNIMKIKNFKPIKIGTNTIYSFMKVDGPTRVLVLSYDQPKDDSSSELSQTVENCKLDLQLSLPRIGVSLIDHNSKELIYLSLNDISLSFSLSNIFSRFELIVTNMQIDNQLMNTDYPVLFYHTNNSNNEEQDPKPFLHFSFIKNEEKKGLKYFELLSLLIQEVNLMLDDSILASIIETITKIKQLDKNFKKHKKNQQLQQNPQQQQPQQQNNEIQNNPINSPFILNDEKSKIQLLNDIEPISSDPLLLPTSNSAISSNNNNNNNNLTKKKKKKSMIYIKLLLLNPIKVILSFSFVRDGFVGHSNSDFVGILLEVVGVSFGLDRTPLCLNALILEHPFLSERLFASRIKSHYTMQSLNQLYKVIGSSDNIGNPVGLFNHIGTGVKDFFYEPALGLITSPKDFGKGLAKGSISLVKNSVYGLFNTLSKLSNTVGKGVAILSFDDQYLRNRQRSRQKKAKHLGEGVVYGFKSLGKGVIDGVTGVVTKPIEGAIKGSIEGFAKGMAQGVVGVAVKPVVGVFDLVTMTTEGIRNTTNLFKDTTRMRPPRCFGTDNLLVEYNFEQSEGHYILETTFKGRFKNSDTYIIHFNNGGVKNYITLITNLRILLVKQIKNSYSFRWSSTFENIKSCEITPDGLLLHFEHLQRIKSVDYRSQHCIHITDPDQLSQLYLIIKEQILKIKK</sequence>
<comment type="function">
    <text evidence="1">Mediates the transfer of lipids between membranes at organelle contact sites.</text>
</comment>
<comment type="subcellular location">
    <subcellularLocation>
        <location evidence="5">Membrane</location>
        <topology evidence="5">Peripheral membrane protein</topology>
    </subcellularLocation>
</comment>
<protein>
    <recommendedName>
        <fullName evidence="2">Intermembrane lipid transfer protein vps13D</fullName>
    </recommendedName>
    <alternativeName>
        <fullName>Putative vacuolar protein sorting-associated protein 13D</fullName>
    </alternativeName>
</protein>